<evidence type="ECO:0000255" key="1">
    <source>
        <dbReference type="HAMAP-Rule" id="MF_00501"/>
    </source>
</evidence>
<evidence type="ECO:0000305" key="2"/>
<proteinExistence type="inferred from homology"/>
<sequence length="69" mass="8133">MKKNIHPEYKKIFATCSCGYTIPIFSTKSSDMSLDVCSQCHPFYTGKQRTMNKKGRIQRFKKRFNFSEI</sequence>
<dbReference type="EMBL" id="CP000263">
    <property type="protein sequence ID" value="ABJ90825.1"/>
    <property type="molecule type" value="Genomic_DNA"/>
</dbReference>
<dbReference type="RefSeq" id="WP_011672744.1">
    <property type="nucleotide sequence ID" value="NC_008513.1"/>
</dbReference>
<dbReference type="SMR" id="Q056X4"/>
<dbReference type="STRING" id="372461.BCc_375"/>
<dbReference type="KEGG" id="bcc:BCc_375"/>
<dbReference type="eggNOG" id="COG0254">
    <property type="taxonomic scope" value="Bacteria"/>
</dbReference>
<dbReference type="HOGENOM" id="CLU_114306_4_3_6"/>
<dbReference type="OrthoDB" id="9803251at2"/>
<dbReference type="Proteomes" id="UP000000669">
    <property type="component" value="Chromosome"/>
</dbReference>
<dbReference type="GO" id="GO:1990904">
    <property type="term" value="C:ribonucleoprotein complex"/>
    <property type="evidence" value="ECO:0007669"/>
    <property type="project" value="UniProtKB-KW"/>
</dbReference>
<dbReference type="GO" id="GO:0005840">
    <property type="term" value="C:ribosome"/>
    <property type="evidence" value="ECO:0007669"/>
    <property type="project" value="UniProtKB-KW"/>
</dbReference>
<dbReference type="GO" id="GO:0046872">
    <property type="term" value="F:metal ion binding"/>
    <property type="evidence" value="ECO:0007669"/>
    <property type="project" value="UniProtKB-KW"/>
</dbReference>
<dbReference type="GO" id="GO:0019843">
    <property type="term" value="F:rRNA binding"/>
    <property type="evidence" value="ECO:0007669"/>
    <property type="project" value="UniProtKB-KW"/>
</dbReference>
<dbReference type="GO" id="GO:0003735">
    <property type="term" value="F:structural constituent of ribosome"/>
    <property type="evidence" value="ECO:0007669"/>
    <property type="project" value="InterPro"/>
</dbReference>
<dbReference type="GO" id="GO:0006412">
    <property type="term" value="P:translation"/>
    <property type="evidence" value="ECO:0007669"/>
    <property type="project" value="UniProtKB-UniRule"/>
</dbReference>
<dbReference type="Gene3D" id="4.10.830.30">
    <property type="entry name" value="Ribosomal protein L31"/>
    <property type="match status" value="1"/>
</dbReference>
<dbReference type="HAMAP" id="MF_00501">
    <property type="entry name" value="Ribosomal_bL31_1"/>
    <property type="match status" value="1"/>
</dbReference>
<dbReference type="InterPro" id="IPR034704">
    <property type="entry name" value="Ribosomal_bL28/bL31-like_sf"/>
</dbReference>
<dbReference type="InterPro" id="IPR002150">
    <property type="entry name" value="Ribosomal_bL31"/>
</dbReference>
<dbReference type="InterPro" id="IPR027491">
    <property type="entry name" value="Ribosomal_bL31_A"/>
</dbReference>
<dbReference type="InterPro" id="IPR042105">
    <property type="entry name" value="Ribosomal_bL31_sf"/>
</dbReference>
<dbReference type="NCBIfam" id="TIGR00105">
    <property type="entry name" value="L31"/>
    <property type="match status" value="1"/>
</dbReference>
<dbReference type="NCBIfam" id="NF000612">
    <property type="entry name" value="PRK00019.1"/>
    <property type="match status" value="1"/>
</dbReference>
<dbReference type="PANTHER" id="PTHR33280">
    <property type="entry name" value="50S RIBOSOMAL PROTEIN L31, CHLOROPLASTIC"/>
    <property type="match status" value="1"/>
</dbReference>
<dbReference type="PANTHER" id="PTHR33280:SF1">
    <property type="entry name" value="LARGE RIBOSOMAL SUBUNIT PROTEIN BL31C"/>
    <property type="match status" value="1"/>
</dbReference>
<dbReference type="Pfam" id="PF01197">
    <property type="entry name" value="Ribosomal_L31"/>
    <property type="match status" value="1"/>
</dbReference>
<dbReference type="PRINTS" id="PR01249">
    <property type="entry name" value="RIBOSOMALL31"/>
</dbReference>
<dbReference type="SUPFAM" id="SSF143800">
    <property type="entry name" value="L28p-like"/>
    <property type="match status" value="1"/>
</dbReference>
<dbReference type="PROSITE" id="PS01143">
    <property type="entry name" value="RIBOSOMAL_L31"/>
    <property type="match status" value="1"/>
</dbReference>
<reference key="1">
    <citation type="journal article" date="2006" name="Science">
        <title>A small microbial genome: the end of a long symbiotic relationship?</title>
        <authorList>
            <person name="Perez-Brocal V."/>
            <person name="Gil R."/>
            <person name="Ramos S."/>
            <person name="Lamelas A."/>
            <person name="Postigo M."/>
            <person name="Michelena J.M."/>
            <person name="Silva F.J."/>
            <person name="Moya A."/>
            <person name="Latorre A."/>
        </authorList>
    </citation>
    <scope>NUCLEOTIDE SEQUENCE [LARGE SCALE GENOMIC DNA]</scope>
    <source>
        <strain>Cc</strain>
    </source>
</reference>
<comment type="function">
    <text evidence="1">Binds the 23S rRNA.</text>
</comment>
<comment type="cofactor">
    <cofactor evidence="1">
        <name>Zn(2+)</name>
        <dbReference type="ChEBI" id="CHEBI:29105"/>
    </cofactor>
    <text evidence="1">Binds 1 zinc ion per subunit.</text>
</comment>
<comment type="subunit">
    <text evidence="1">Part of the 50S ribosomal subunit.</text>
</comment>
<comment type="similarity">
    <text evidence="1">Belongs to the bacterial ribosomal protein bL31 family. Type A subfamily.</text>
</comment>
<organism>
    <name type="scientific">Buchnera aphidicola subsp. Cinara cedri (strain Cc)</name>
    <dbReference type="NCBI Taxonomy" id="372461"/>
    <lineage>
        <taxon>Bacteria</taxon>
        <taxon>Pseudomonadati</taxon>
        <taxon>Pseudomonadota</taxon>
        <taxon>Gammaproteobacteria</taxon>
        <taxon>Enterobacterales</taxon>
        <taxon>Erwiniaceae</taxon>
        <taxon>Buchnera</taxon>
    </lineage>
</organism>
<gene>
    <name evidence="1" type="primary">rpmE</name>
    <name type="ordered locus">BCc_375</name>
</gene>
<name>RL31_BUCCC</name>
<keyword id="KW-0479">Metal-binding</keyword>
<keyword id="KW-1185">Reference proteome</keyword>
<keyword id="KW-0687">Ribonucleoprotein</keyword>
<keyword id="KW-0689">Ribosomal protein</keyword>
<keyword id="KW-0694">RNA-binding</keyword>
<keyword id="KW-0699">rRNA-binding</keyword>
<keyword id="KW-0862">Zinc</keyword>
<accession>Q056X4</accession>
<feature type="chain" id="PRO_1000126575" description="Large ribosomal subunit protein bL31">
    <location>
        <begin position="1"/>
        <end position="69"/>
    </location>
</feature>
<feature type="binding site" evidence="1">
    <location>
        <position position="16"/>
    </location>
    <ligand>
        <name>Zn(2+)</name>
        <dbReference type="ChEBI" id="CHEBI:29105"/>
    </ligand>
</feature>
<feature type="binding site" evidence="1">
    <location>
        <position position="18"/>
    </location>
    <ligand>
        <name>Zn(2+)</name>
        <dbReference type="ChEBI" id="CHEBI:29105"/>
    </ligand>
</feature>
<feature type="binding site" evidence="1">
    <location>
        <position position="37"/>
    </location>
    <ligand>
        <name>Zn(2+)</name>
        <dbReference type="ChEBI" id="CHEBI:29105"/>
    </ligand>
</feature>
<feature type="binding site" evidence="1">
    <location>
        <position position="40"/>
    </location>
    <ligand>
        <name>Zn(2+)</name>
        <dbReference type="ChEBI" id="CHEBI:29105"/>
    </ligand>
</feature>
<protein>
    <recommendedName>
        <fullName evidence="1">Large ribosomal subunit protein bL31</fullName>
    </recommendedName>
    <alternativeName>
        <fullName evidence="2">50S ribosomal protein L31</fullName>
    </alternativeName>
</protein>